<name>RF1_LISMC</name>
<proteinExistence type="inferred from homology"/>
<protein>
    <recommendedName>
        <fullName evidence="1">Peptide chain release factor 1</fullName>
        <shortName evidence="1">RF-1</shortName>
    </recommendedName>
</protein>
<organism>
    <name type="scientific">Listeria monocytogenes serotype 4b (strain CLIP80459)</name>
    <dbReference type="NCBI Taxonomy" id="568819"/>
    <lineage>
        <taxon>Bacteria</taxon>
        <taxon>Bacillati</taxon>
        <taxon>Bacillota</taxon>
        <taxon>Bacilli</taxon>
        <taxon>Bacillales</taxon>
        <taxon>Listeriaceae</taxon>
        <taxon>Listeria</taxon>
    </lineage>
</organism>
<accession>C1KYW0</accession>
<reference key="1">
    <citation type="journal article" date="2012" name="BMC Genomics">
        <title>Comparative genomics and transcriptomics of lineages I, II, and III strains of Listeria monocytogenes.</title>
        <authorList>
            <person name="Hain T."/>
            <person name="Ghai R."/>
            <person name="Billion A."/>
            <person name="Kuenne C.T."/>
            <person name="Steinweg C."/>
            <person name="Izar B."/>
            <person name="Mohamed W."/>
            <person name="Mraheil M."/>
            <person name="Domann E."/>
            <person name="Schaffrath S."/>
            <person name="Karst U."/>
            <person name="Goesmann A."/>
            <person name="Oehm S."/>
            <person name="Puhler A."/>
            <person name="Merkl R."/>
            <person name="Vorwerk S."/>
            <person name="Glaser P."/>
            <person name="Garrido P."/>
            <person name="Rusniok C."/>
            <person name="Buchrieser C."/>
            <person name="Goebel W."/>
            <person name="Chakraborty T."/>
        </authorList>
    </citation>
    <scope>NUCLEOTIDE SEQUENCE [LARGE SCALE GENOMIC DNA]</scope>
    <source>
        <strain>CLIP80459</strain>
    </source>
</reference>
<dbReference type="EMBL" id="FM242711">
    <property type="protein sequence ID" value="CAS06267.1"/>
    <property type="molecule type" value="Genomic_DNA"/>
</dbReference>
<dbReference type="RefSeq" id="WP_003726351.1">
    <property type="nucleotide sequence ID" value="NC_012488.1"/>
</dbReference>
<dbReference type="SMR" id="C1KYW0"/>
<dbReference type="KEGG" id="lmc:Lm4b_02512"/>
<dbReference type="HOGENOM" id="CLU_036856_0_1_9"/>
<dbReference type="GO" id="GO:0005737">
    <property type="term" value="C:cytoplasm"/>
    <property type="evidence" value="ECO:0007669"/>
    <property type="project" value="UniProtKB-SubCell"/>
</dbReference>
<dbReference type="GO" id="GO:0016149">
    <property type="term" value="F:translation release factor activity, codon specific"/>
    <property type="evidence" value="ECO:0007669"/>
    <property type="project" value="UniProtKB-UniRule"/>
</dbReference>
<dbReference type="FunFam" id="3.30.160.20:FF:000004">
    <property type="entry name" value="Peptide chain release factor 1"/>
    <property type="match status" value="1"/>
</dbReference>
<dbReference type="FunFam" id="3.30.70.1660:FF:000002">
    <property type="entry name" value="Peptide chain release factor 1"/>
    <property type="match status" value="1"/>
</dbReference>
<dbReference type="FunFam" id="3.30.70.1660:FF:000004">
    <property type="entry name" value="Peptide chain release factor 1"/>
    <property type="match status" value="1"/>
</dbReference>
<dbReference type="Gene3D" id="3.30.160.20">
    <property type="match status" value="1"/>
</dbReference>
<dbReference type="Gene3D" id="3.30.70.1660">
    <property type="match status" value="1"/>
</dbReference>
<dbReference type="Gene3D" id="6.10.140.1950">
    <property type="match status" value="1"/>
</dbReference>
<dbReference type="HAMAP" id="MF_00093">
    <property type="entry name" value="Rel_fac_1"/>
    <property type="match status" value="1"/>
</dbReference>
<dbReference type="InterPro" id="IPR005139">
    <property type="entry name" value="PCRF"/>
</dbReference>
<dbReference type="InterPro" id="IPR000352">
    <property type="entry name" value="Pep_chain_release_fac_I"/>
</dbReference>
<dbReference type="InterPro" id="IPR045853">
    <property type="entry name" value="Pep_chain_release_fac_I_sf"/>
</dbReference>
<dbReference type="InterPro" id="IPR050057">
    <property type="entry name" value="Prokaryotic/Mito_RF"/>
</dbReference>
<dbReference type="InterPro" id="IPR004373">
    <property type="entry name" value="RF-1"/>
</dbReference>
<dbReference type="NCBIfam" id="TIGR00019">
    <property type="entry name" value="prfA"/>
    <property type="match status" value="1"/>
</dbReference>
<dbReference type="NCBIfam" id="NF001859">
    <property type="entry name" value="PRK00591.1"/>
    <property type="match status" value="1"/>
</dbReference>
<dbReference type="PANTHER" id="PTHR43804">
    <property type="entry name" value="LD18447P"/>
    <property type="match status" value="1"/>
</dbReference>
<dbReference type="PANTHER" id="PTHR43804:SF7">
    <property type="entry name" value="LD18447P"/>
    <property type="match status" value="1"/>
</dbReference>
<dbReference type="Pfam" id="PF03462">
    <property type="entry name" value="PCRF"/>
    <property type="match status" value="1"/>
</dbReference>
<dbReference type="Pfam" id="PF00472">
    <property type="entry name" value="RF-1"/>
    <property type="match status" value="1"/>
</dbReference>
<dbReference type="SMART" id="SM00937">
    <property type="entry name" value="PCRF"/>
    <property type="match status" value="1"/>
</dbReference>
<dbReference type="SUPFAM" id="SSF75620">
    <property type="entry name" value="Release factor"/>
    <property type="match status" value="1"/>
</dbReference>
<dbReference type="PROSITE" id="PS00745">
    <property type="entry name" value="RF_PROK_I"/>
    <property type="match status" value="1"/>
</dbReference>
<evidence type="ECO:0000255" key="1">
    <source>
        <dbReference type="HAMAP-Rule" id="MF_00093"/>
    </source>
</evidence>
<keyword id="KW-0963">Cytoplasm</keyword>
<keyword id="KW-0488">Methylation</keyword>
<keyword id="KW-0648">Protein biosynthesis</keyword>
<gene>
    <name evidence="1" type="primary">prfA</name>
    <name type="ordered locus">Lm4b_02512</name>
</gene>
<feature type="chain" id="PRO_1000202698" description="Peptide chain release factor 1">
    <location>
        <begin position="1"/>
        <end position="358"/>
    </location>
</feature>
<feature type="modified residue" description="N5-methylglutamine" evidence="1">
    <location>
        <position position="233"/>
    </location>
</feature>
<comment type="function">
    <text evidence="1">Peptide chain release factor 1 directs the termination of translation in response to the peptide chain termination codons UAG and UAA.</text>
</comment>
<comment type="subcellular location">
    <subcellularLocation>
        <location evidence="1">Cytoplasm</location>
    </subcellularLocation>
</comment>
<comment type="PTM">
    <text evidence="1">Methylated by PrmC. Methylation increases the termination efficiency of RF1.</text>
</comment>
<comment type="similarity">
    <text evidence="1">Belongs to the prokaryotic/mitochondrial release factor family.</text>
</comment>
<sequence length="358" mass="40680">MYDRLQAVEDRYDELNELLSDPDVVSDPKRLRDLSKEQSGITATVETYREYKNVNEQINETKELLGEKLDDEMREMAKEEFAELQKEKADLEERLKLLLVPKDPNDDKNVILEIRGAAGGDEAALFAGDLFRMYSKYAESRGWKVEIMDANPTGIGGYKEIIAMMNGNDAFSRMKYENGAHRVQRVPETESGGRIHTSTATVAILPEAEEVEIELHDKDIRTDTFASTGAGGQSVNTTMSAVRLTHIPTGIVVSMQDERSQLKNKDKAMKVLRARVYDKFEREAREEYDANRKSAVGTGDRSERIRTYNYPQNRVTDHRIGLTIQKLDQIMEGKLDEIIDALILEDQTSKLEHLNDAN</sequence>